<comment type="function">
    <text evidence="1">Binds 16S rRNA, required for the assembly of 30S particles and may also be responsible for determining the conformation of the 16S rRNA at the A site.</text>
</comment>
<comment type="subunit">
    <text evidence="1">Part of the 30S ribosomal subunit. Contacts proteins S3 and S10.</text>
</comment>
<comment type="similarity">
    <text evidence="1">Belongs to the universal ribosomal protein uS14 family.</text>
</comment>
<feature type="chain" id="PRO_0000130876" description="Small ribosomal subunit protein uS14">
    <location>
        <begin position="1"/>
        <end position="101"/>
    </location>
</feature>
<reference key="1">
    <citation type="journal article" date="2002" name="Proc. Natl. Acad. Sci. U.S.A.">
        <title>The Brucella suis genome reveals fundamental similarities between animal and plant pathogens and symbionts.</title>
        <authorList>
            <person name="Paulsen I.T."/>
            <person name="Seshadri R."/>
            <person name="Nelson K.E."/>
            <person name="Eisen J.A."/>
            <person name="Heidelberg J.F."/>
            <person name="Read T.D."/>
            <person name="Dodson R.J."/>
            <person name="Umayam L.A."/>
            <person name="Brinkac L.M."/>
            <person name="Beanan M.J."/>
            <person name="Daugherty S.C."/>
            <person name="DeBoy R.T."/>
            <person name="Durkin A.S."/>
            <person name="Kolonay J.F."/>
            <person name="Madupu R."/>
            <person name="Nelson W.C."/>
            <person name="Ayodeji B."/>
            <person name="Kraul M."/>
            <person name="Shetty J."/>
            <person name="Malek J.A."/>
            <person name="Van Aken S.E."/>
            <person name="Riedmuller S."/>
            <person name="Tettelin H."/>
            <person name="Gill S.R."/>
            <person name="White O."/>
            <person name="Salzberg S.L."/>
            <person name="Hoover D.L."/>
            <person name="Lindler L.E."/>
            <person name="Halling S.M."/>
            <person name="Boyle S.M."/>
            <person name="Fraser C.M."/>
        </authorList>
    </citation>
    <scope>NUCLEOTIDE SEQUENCE [LARGE SCALE GENOMIC DNA]</scope>
    <source>
        <strain>1330</strain>
    </source>
</reference>
<reference key="2">
    <citation type="journal article" date="2011" name="J. Bacteriol.">
        <title>Revised genome sequence of Brucella suis 1330.</title>
        <authorList>
            <person name="Tae H."/>
            <person name="Shallom S."/>
            <person name="Settlage R."/>
            <person name="Preston D."/>
            <person name="Adams L.G."/>
            <person name="Garner H.R."/>
        </authorList>
    </citation>
    <scope>NUCLEOTIDE SEQUENCE [LARGE SCALE GENOMIC DNA]</scope>
    <source>
        <strain>1330</strain>
    </source>
</reference>
<name>RS14_BRUSU</name>
<evidence type="ECO:0000255" key="1">
    <source>
        <dbReference type="HAMAP-Rule" id="MF_00537"/>
    </source>
</evidence>
<evidence type="ECO:0000305" key="2"/>
<protein>
    <recommendedName>
        <fullName evidence="1">Small ribosomal subunit protein uS14</fullName>
    </recommendedName>
    <alternativeName>
        <fullName evidence="2">30S ribosomal protein S14</fullName>
    </alternativeName>
</protein>
<gene>
    <name evidence="1" type="primary">rpsN</name>
    <name type="ordered locus">BR1220</name>
    <name type="ordered locus">BS1330_I1216</name>
</gene>
<organism>
    <name type="scientific">Brucella suis biovar 1 (strain 1330)</name>
    <dbReference type="NCBI Taxonomy" id="204722"/>
    <lineage>
        <taxon>Bacteria</taxon>
        <taxon>Pseudomonadati</taxon>
        <taxon>Pseudomonadota</taxon>
        <taxon>Alphaproteobacteria</taxon>
        <taxon>Hyphomicrobiales</taxon>
        <taxon>Brucellaceae</taxon>
        <taxon>Brucella/Ochrobactrum group</taxon>
        <taxon>Brucella</taxon>
    </lineage>
</organism>
<proteinExistence type="inferred from homology"/>
<accession>P66400</accession>
<accession>G0KAE1</accession>
<accession>Q8YHM7</accession>
<keyword id="KW-0687">Ribonucleoprotein</keyword>
<keyword id="KW-0689">Ribosomal protein</keyword>
<keyword id="KW-0694">RNA-binding</keyword>
<keyword id="KW-0699">rRNA-binding</keyword>
<dbReference type="EMBL" id="AE014291">
    <property type="protein sequence ID" value="AAN30139.1"/>
    <property type="molecule type" value="Genomic_DNA"/>
</dbReference>
<dbReference type="EMBL" id="CP002997">
    <property type="protein sequence ID" value="AEM18557.1"/>
    <property type="molecule type" value="Genomic_DNA"/>
</dbReference>
<dbReference type="RefSeq" id="WP_002964349.1">
    <property type="nucleotide sequence ID" value="NZ_KN046804.1"/>
</dbReference>
<dbReference type="SMR" id="P66400"/>
<dbReference type="GeneID" id="97533537"/>
<dbReference type="KEGG" id="bms:BR1220"/>
<dbReference type="KEGG" id="bsi:BS1330_I1216"/>
<dbReference type="PATRIC" id="fig|204722.21.peg.2256"/>
<dbReference type="HOGENOM" id="CLU_139869_0_1_5"/>
<dbReference type="Proteomes" id="UP000007104">
    <property type="component" value="Chromosome I"/>
</dbReference>
<dbReference type="GO" id="GO:0005737">
    <property type="term" value="C:cytoplasm"/>
    <property type="evidence" value="ECO:0007669"/>
    <property type="project" value="UniProtKB-ARBA"/>
</dbReference>
<dbReference type="GO" id="GO:0015935">
    <property type="term" value="C:small ribosomal subunit"/>
    <property type="evidence" value="ECO:0007669"/>
    <property type="project" value="TreeGrafter"/>
</dbReference>
<dbReference type="GO" id="GO:0019843">
    <property type="term" value="F:rRNA binding"/>
    <property type="evidence" value="ECO:0007669"/>
    <property type="project" value="UniProtKB-UniRule"/>
</dbReference>
<dbReference type="GO" id="GO:0003735">
    <property type="term" value="F:structural constituent of ribosome"/>
    <property type="evidence" value="ECO:0007669"/>
    <property type="project" value="InterPro"/>
</dbReference>
<dbReference type="GO" id="GO:0006412">
    <property type="term" value="P:translation"/>
    <property type="evidence" value="ECO:0007669"/>
    <property type="project" value="UniProtKB-UniRule"/>
</dbReference>
<dbReference type="FunFam" id="1.10.287.1480:FF:000001">
    <property type="entry name" value="30S ribosomal protein S14"/>
    <property type="match status" value="1"/>
</dbReference>
<dbReference type="Gene3D" id="1.10.287.1480">
    <property type="match status" value="1"/>
</dbReference>
<dbReference type="HAMAP" id="MF_00537">
    <property type="entry name" value="Ribosomal_uS14_1"/>
    <property type="match status" value="1"/>
</dbReference>
<dbReference type="InterPro" id="IPR001209">
    <property type="entry name" value="Ribosomal_uS14"/>
</dbReference>
<dbReference type="InterPro" id="IPR023036">
    <property type="entry name" value="Ribosomal_uS14_bac/plastid"/>
</dbReference>
<dbReference type="InterPro" id="IPR018271">
    <property type="entry name" value="Ribosomal_uS14_CS"/>
</dbReference>
<dbReference type="NCBIfam" id="NF006477">
    <property type="entry name" value="PRK08881.1"/>
    <property type="match status" value="1"/>
</dbReference>
<dbReference type="PANTHER" id="PTHR19836">
    <property type="entry name" value="30S RIBOSOMAL PROTEIN S14"/>
    <property type="match status" value="1"/>
</dbReference>
<dbReference type="PANTHER" id="PTHR19836:SF19">
    <property type="entry name" value="SMALL RIBOSOMAL SUBUNIT PROTEIN US14M"/>
    <property type="match status" value="1"/>
</dbReference>
<dbReference type="Pfam" id="PF00253">
    <property type="entry name" value="Ribosomal_S14"/>
    <property type="match status" value="1"/>
</dbReference>
<dbReference type="SUPFAM" id="SSF57716">
    <property type="entry name" value="Glucocorticoid receptor-like (DNA-binding domain)"/>
    <property type="match status" value="1"/>
</dbReference>
<dbReference type="PROSITE" id="PS00527">
    <property type="entry name" value="RIBOSOMAL_S14"/>
    <property type="match status" value="1"/>
</dbReference>
<sequence length="101" mass="11666">MAKTSAVEKNKRREKLVKRHAVKRARLKAIVMDQGLPLEERFRATIRLAELPRNSAKVRIRNRCEVSGRPRGYYRKLKMSRIALRQLGSLGQIPGVVKSSW</sequence>